<evidence type="ECO:0000255" key="1">
    <source>
        <dbReference type="HAMAP-Rule" id="MF_00037"/>
    </source>
</evidence>
<feature type="chain" id="PRO_1000002904" description="UDP-N-acetylenolpyruvoylglucosamine reductase">
    <location>
        <begin position="1"/>
        <end position="319"/>
    </location>
</feature>
<feature type="domain" description="FAD-binding PCMH-type" evidence="1">
    <location>
        <begin position="35"/>
        <end position="198"/>
    </location>
</feature>
<feature type="active site" evidence="1">
    <location>
        <position position="178"/>
    </location>
</feature>
<feature type="active site" description="Proton donor" evidence="1">
    <location>
        <position position="227"/>
    </location>
</feature>
<feature type="active site" evidence="1">
    <location>
        <position position="302"/>
    </location>
</feature>
<reference key="1">
    <citation type="journal article" date="2011" name="Stand. Genomic Sci.">
        <title>Complete genome sequence of Rhodospirillum rubrum type strain (S1).</title>
        <authorList>
            <person name="Munk A.C."/>
            <person name="Copeland A."/>
            <person name="Lucas S."/>
            <person name="Lapidus A."/>
            <person name="Del Rio T.G."/>
            <person name="Barry K."/>
            <person name="Detter J.C."/>
            <person name="Hammon N."/>
            <person name="Israni S."/>
            <person name="Pitluck S."/>
            <person name="Brettin T."/>
            <person name="Bruce D."/>
            <person name="Han C."/>
            <person name="Tapia R."/>
            <person name="Gilna P."/>
            <person name="Schmutz J."/>
            <person name="Larimer F."/>
            <person name="Land M."/>
            <person name="Kyrpides N.C."/>
            <person name="Mavromatis K."/>
            <person name="Richardson P."/>
            <person name="Rohde M."/>
            <person name="Goeker M."/>
            <person name="Klenk H.P."/>
            <person name="Zhang Y."/>
            <person name="Roberts G.P."/>
            <person name="Reslewic S."/>
            <person name="Schwartz D.C."/>
        </authorList>
    </citation>
    <scope>NUCLEOTIDE SEQUENCE [LARGE SCALE GENOMIC DNA]</scope>
    <source>
        <strain>ATCC 11170 / ATH 1.1.1 / DSM 467 / LMG 4362 / NCIMB 8255 / S1</strain>
    </source>
</reference>
<organism>
    <name type="scientific">Rhodospirillum rubrum (strain ATCC 11170 / ATH 1.1.1 / DSM 467 / LMG 4362 / NCIMB 8255 / S1)</name>
    <dbReference type="NCBI Taxonomy" id="269796"/>
    <lineage>
        <taxon>Bacteria</taxon>
        <taxon>Pseudomonadati</taxon>
        <taxon>Pseudomonadota</taxon>
        <taxon>Alphaproteobacteria</taxon>
        <taxon>Rhodospirillales</taxon>
        <taxon>Rhodospirillaceae</taxon>
        <taxon>Rhodospirillum</taxon>
    </lineage>
</organism>
<dbReference type="EC" id="1.3.1.98" evidence="1"/>
<dbReference type="EMBL" id="CP000230">
    <property type="protein sequence ID" value="ABC21749.1"/>
    <property type="molecule type" value="Genomic_DNA"/>
</dbReference>
<dbReference type="RefSeq" id="WP_011388703.1">
    <property type="nucleotide sequence ID" value="NC_007643.1"/>
</dbReference>
<dbReference type="RefSeq" id="YP_426036.1">
    <property type="nucleotide sequence ID" value="NC_007643.1"/>
</dbReference>
<dbReference type="SMR" id="Q2RVU6"/>
<dbReference type="STRING" id="269796.Rru_A0948"/>
<dbReference type="EnsemblBacteria" id="ABC21749">
    <property type="protein sequence ID" value="ABC21749"/>
    <property type="gene ID" value="Rru_A0948"/>
</dbReference>
<dbReference type="KEGG" id="rru:Rru_A0948"/>
<dbReference type="PATRIC" id="fig|269796.9.peg.1004"/>
<dbReference type="eggNOG" id="COG0812">
    <property type="taxonomic scope" value="Bacteria"/>
</dbReference>
<dbReference type="HOGENOM" id="CLU_035304_1_0_5"/>
<dbReference type="PhylomeDB" id="Q2RVU6"/>
<dbReference type="UniPathway" id="UPA00219"/>
<dbReference type="Proteomes" id="UP000001929">
    <property type="component" value="Chromosome"/>
</dbReference>
<dbReference type="GO" id="GO:0005829">
    <property type="term" value="C:cytosol"/>
    <property type="evidence" value="ECO:0007669"/>
    <property type="project" value="TreeGrafter"/>
</dbReference>
<dbReference type="GO" id="GO:0071949">
    <property type="term" value="F:FAD binding"/>
    <property type="evidence" value="ECO:0007669"/>
    <property type="project" value="InterPro"/>
</dbReference>
<dbReference type="GO" id="GO:0008762">
    <property type="term" value="F:UDP-N-acetylmuramate dehydrogenase activity"/>
    <property type="evidence" value="ECO:0007669"/>
    <property type="project" value="UniProtKB-UniRule"/>
</dbReference>
<dbReference type="GO" id="GO:0051301">
    <property type="term" value="P:cell division"/>
    <property type="evidence" value="ECO:0007669"/>
    <property type="project" value="UniProtKB-KW"/>
</dbReference>
<dbReference type="GO" id="GO:0071555">
    <property type="term" value="P:cell wall organization"/>
    <property type="evidence" value="ECO:0007669"/>
    <property type="project" value="UniProtKB-KW"/>
</dbReference>
<dbReference type="GO" id="GO:0009252">
    <property type="term" value="P:peptidoglycan biosynthetic process"/>
    <property type="evidence" value="ECO:0007669"/>
    <property type="project" value="UniProtKB-UniRule"/>
</dbReference>
<dbReference type="GO" id="GO:0008360">
    <property type="term" value="P:regulation of cell shape"/>
    <property type="evidence" value="ECO:0007669"/>
    <property type="project" value="UniProtKB-KW"/>
</dbReference>
<dbReference type="Gene3D" id="3.30.465.10">
    <property type="match status" value="1"/>
</dbReference>
<dbReference type="Gene3D" id="3.90.78.10">
    <property type="entry name" value="UDP-N-acetylenolpyruvoylglucosamine reductase, C-terminal domain"/>
    <property type="match status" value="1"/>
</dbReference>
<dbReference type="Gene3D" id="3.30.43.10">
    <property type="entry name" value="Uridine Diphospho-n-acetylenolpyruvylglucosamine Reductase, domain 2"/>
    <property type="match status" value="1"/>
</dbReference>
<dbReference type="HAMAP" id="MF_00037">
    <property type="entry name" value="MurB"/>
    <property type="match status" value="1"/>
</dbReference>
<dbReference type="InterPro" id="IPR016166">
    <property type="entry name" value="FAD-bd_PCMH"/>
</dbReference>
<dbReference type="InterPro" id="IPR036318">
    <property type="entry name" value="FAD-bd_PCMH-like_sf"/>
</dbReference>
<dbReference type="InterPro" id="IPR016167">
    <property type="entry name" value="FAD-bd_PCMH_sub1"/>
</dbReference>
<dbReference type="InterPro" id="IPR016169">
    <property type="entry name" value="FAD-bd_PCMH_sub2"/>
</dbReference>
<dbReference type="InterPro" id="IPR003170">
    <property type="entry name" value="MurB"/>
</dbReference>
<dbReference type="InterPro" id="IPR011601">
    <property type="entry name" value="MurB_C"/>
</dbReference>
<dbReference type="InterPro" id="IPR036635">
    <property type="entry name" value="MurB_C_sf"/>
</dbReference>
<dbReference type="InterPro" id="IPR006094">
    <property type="entry name" value="Oxid_FAD_bind_N"/>
</dbReference>
<dbReference type="NCBIfam" id="TIGR00179">
    <property type="entry name" value="murB"/>
    <property type="match status" value="1"/>
</dbReference>
<dbReference type="NCBIfam" id="NF010480">
    <property type="entry name" value="PRK13905.1"/>
    <property type="match status" value="1"/>
</dbReference>
<dbReference type="PANTHER" id="PTHR21071">
    <property type="entry name" value="UDP-N-ACETYLENOLPYRUVOYLGLUCOSAMINE REDUCTASE"/>
    <property type="match status" value="1"/>
</dbReference>
<dbReference type="PANTHER" id="PTHR21071:SF4">
    <property type="entry name" value="UDP-N-ACETYLENOLPYRUVOYLGLUCOSAMINE REDUCTASE"/>
    <property type="match status" value="1"/>
</dbReference>
<dbReference type="Pfam" id="PF01565">
    <property type="entry name" value="FAD_binding_4"/>
    <property type="match status" value="1"/>
</dbReference>
<dbReference type="Pfam" id="PF02873">
    <property type="entry name" value="MurB_C"/>
    <property type="match status" value="1"/>
</dbReference>
<dbReference type="SUPFAM" id="SSF56176">
    <property type="entry name" value="FAD-binding/transporter-associated domain-like"/>
    <property type="match status" value="1"/>
</dbReference>
<dbReference type="SUPFAM" id="SSF56194">
    <property type="entry name" value="Uridine diphospho-N-Acetylenolpyruvylglucosamine reductase, MurB, C-terminal domain"/>
    <property type="match status" value="1"/>
</dbReference>
<dbReference type="PROSITE" id="PS51387">
    <property type="entry name" value="FAD_PCMH"/>
    <property type="match status" value="1"/>
</dbReference>
<gene>
    <name evidence="1" type="primary">murB</name>
    <name type="ordered locus">Rru_A0948</name>
</gene>
<accession>Q2RVU6</accession>
<protein>
    <recommendedName>
        <fullName evidence="1">UDP-N-acetylenolpyruvoylglucosamine reductase</fullName>
        <ecNumber evidence="1">1.3.1.98</ecNumber>
    </recommendedName>
    <alternativeName>
        <fullName evidence="1">UDP-N-acetylmuramate dehydrogenase</fullName>
    </alternativeName>
</protein>
<proteinExistence type="inferred from homology"/>
<name>MURB_RHORT</name>
<sequence>MIALRAPTPLIDRLPAVRGRLSADVALAPVTWFRVGGPAEAMFKPADAQDLADFLAGRPRDVAVRVIGVASNLLVRDGGVPGVVIRLGRAFTGVEVVGETLVCGASALDATVAKVAEAAGLAGLEFLSGIPGTLGGALRMNAGAHLREMADIVVLATAVDGLGQSHTLTPAQMGFSYRACALPEDWIFTGCVLAGRPDERGAIAARMEALRQAREASQPLRARTGGSTFANPDPDLSGGRRAWELIDAAGCRGLRLGGAQVSEKHCNFLINTGEATAADLEALGETVRRRVMDTSGVALRWEIKRIGIGLDGLSAGENG</sequence>
<comment type="function">
    <text evidence="1">Cell wall formation.</text>
</comment>
<comment type="catalytic activity">
    <reaction evidence="1">
        <text>UDP-N-acetyl-alpha-D-muramate + NADP(+) = UDP-N-acetyl-3-O-(1-carboxyvinyl)-alpha-D-glucosamine + NADPH + H(+)</text>
        <dbReference type="Rhea" id="RHEA:12248"/>
        <dbReference type="ChEBI" id="CHEBI:15378"/>
        <dbReference type="ChEBI" id="CHEBI:57783"/>
        <dbReference type="ChEBI" id="CHEBI:58349"/>
        <dbReference type="ChEBI" id="CHEBI:68483"/>
        <dbReference type="ChEBI" id="CHEBI:70757"/>
        <dbReference type="EC" id="1.3.1.98"/>
    </reaction>
</comment>
<comment type="cofactor">
    <cofactor evidence="1">
        <name>FAD</name>
        <dbReference type="ChEBI" id="CHEBI:57692"/>
    </cofactor>
</comment>
<comment type="pathway">
    <text evidence="1">Cell wall biogenesis; peptidoglycan biosynthesis.</text>
</comment>
<comment type="subcellular location">
    <subcellularLocation>
        <location evidence="1">Cytoplasm</location>
    </subcellularLocation>
</comment>
<comment type="similarity">
    <text evidence="1">Belongs to the MurB family.</text>
</comment>
<keyword id="KW-0131">Cell cycle</keyword>
<keyword id="KW-0132">Cell division</keyword>
<keyword id="KW-0133">Cell shape</keyword>
<keyword id="KW-0961">Cell wall biogenesis/degradation</keyword>
<keyword id="KW-0963">Cytoplasm</keyword>
<keyword id="KW-0274">FAD</keyword>
<keyword id="KW-0285">Flavoprotein</keyword>
<keyword id="KW-0521">NADP</keyword>
<keyword id="KW-0560">Oxidoreductase</keyword>
<keyword id="KW-0573">Peptidoglycan synthesis</keyword>
<keyword id="KW-1185">Reference proteome</keyword>